<accession>Q9SGQ6</accession>
<accession>Q9SFW4</accession>
<proteinExistence type="evidence at transcript level"/>
<sequence>MYRALWLSPLRFIVSSSSSKLTPYVSRGRGLSGIDNGAGCSCSRSVTTMIGNEFIRCQDESKILQLQIVDALRSGERQGASALLFKLIQGNYSLSADDFHDILYYCARSPDPVFVMETYSVMCKKEISLDSRSLLFIVKSLCNGGHLDKASEFIHAVREDDRISPLLPIYNFFLGACARTRSVYHASKCLELMDQRRVGKNGITYVALLKLAVFQRNLSTVNDIWKHYVNHYNLDILSLRRFIWSFTRLGDLKSAYELLQHMVYLALRGEFFVKSNRGKLHSTRLYIPVPSKDETGSEKFAFGVTDRIVDCNSSSKVALPKGHNKILAIRVLRWSFNDVIHACGQSKNSELAEQLMLQLKVMQQQNLKPYDSTLATVAAYCSKALQVDLAEHLLDQISECSYSYPFNNLLAAYDSLDQPERAVRVLARMKELKLRPDMRTYELLFSLFGNVNAPYEEGNMLSQVDCCKRINAIEMDMMRNGFQHSPISRLNVLRALGAEGMVNEMIRHLQKAENLSAHSNMYLGTPTYNIVLHSLLEANETDMVINIFKRMKSCGCPADVATYNIMIDCCSLIHSYKSACALVSMMIRDGFSPKAVTFTALMKILLNDANFEEALNLLDQAALEEIHLDVLSYNTILRKAFEKGMIDVIEYIVEQMHREKVNPDPTTCHYVFSCYVEKGYHATAIEALNVLSLRMLNEEDKESLQDKKIELEENFVMSEDPEAETKIIELFRKSEEHLAAALLNLRWCAMLGGRIIWSEDQSPWARALSNKYG</sequence>
<protein>
    <recommendedName>
        <fullName>Pentatricopeptide repeat-containing protein At1g76280</fullName>
    </recommendedName>
</protein>
<keyword id="KW-0025">Alternative splicing</keyword>
<keyword id="KW-1185">Reference proteome</keyword>
<keyword id="KW-0677">Repeat</keyword>
<comment type="alternative products">
    <event type="alternative splicing"/>
    <isoform>
        <id>Q9SGQ6-1</id>
        <name>1</name>
        <sequence type="displayed"/>
    </isoform>
    <text>A number of isoforms are produced. According to EST sequences.</text>
</comment>
<comment type="similarity">
    <text evidence="1">Belongs to the PPR family. P subfamily.</text>
</comment>
<comment type="sequence caution" evidence="1">
    <conflict type="erroneous gene model prediction">
        <sequence resource="EMBL-CDS" id="AAF16672"/>
    </conflict>
</comment>
<comment type="sequence caution" evidence="1">
    <conflict type="erroneous gene model prediction">
        <sequence resource="EMBL-CDS" id="AAF17637"/>
    </conflict>
</comment>
<comment type="online information" name="Pentatricopeptide repeat proteins">
    <link uri="https://ppr.plantenergy.uwa.edu.au"/>
</comment>
<organism>
    <name type="scientific">Arabidopsis thaliana</name>
    <name type="common">Mouse-ear cress</name>
    <dbReference type="NCBI Taxonomy" id="3702"/>
    <lineage>
        <taxon>Eukaryota</taxon>
        <taxon>Viridiplantae</taxon>
        <taxon>Streptophyta</taxon>
        <taxon>Embryophyta</taxon>
        <taxon>Tracheophyta</taxon>
        <taxon>Spermatophyta</taxon>
        <taxon>Magnoliopsida</taxon>
        <taxon>eudicotyledons</taxon>
        <taxon>Gunneridae</taxon>
        <taxon>Pentapetalae</taxon>
        <taxon>rosids</taxon>
        <taxon>malvids</taxon>
        <taxon>Brassicales</taxon>
        <taxon>Brassicaceae</taxon>
        <taxon>Camelineae</taxon>
        <taxon>Arabidopsis</taxon>
    </lineage>
</organism>
<gene>
    <name type="ordered locus">At1g76280</name>
    <name type="ORF">F15M4.22</name>
    <name type="ORF">T23E18.21</name>
</gene>
<evidence type="ECO:0000305" key="1"/>
<dbReference type="EMBL" id="AC009978">
    <property type="protein sequence ID" value="AAF17637.1"/>
    <property type="status" value="ALT_SEQ"/>
    <property type="molecule type" value="Genomic_DNA"/>
</dbReference>
<dbReference type="EMBL" id="AC012394">
    <property type="protein sequence ID" value="AAF16672.1"/>
    <property type="status" value="ALT_SEQ"/>
    <property type="molecule type" value="Genomic_DNA"/>
</dbReference>
<dbReference type="EMBL" id="CP002684">
    <property type="protein sequence ID" value="AEE35818.1"/>
    <property type="molecule type" value="Genomic_DNA"/>
</dbReference>
<dbReference type="EMBL" id="BX813465">
    <property type="status" value="NOT_ANNOTATED_CDS"/>
    <property type="molecule type" value="mRNA"/>
</dbReference>
<dbReference type="PIR" id="C96790">
    <property type="entry name" value="C96790"/>
</dbReference>
<dbReference type="RefSeq" id="NP_177755.3">
    <molecule id="Q9SGQ6-1"/>
    <property type="nucleotide sequence ID" value="NM_106278.5"/>
</dbReference>
<dbReference type="SMR" id="Q9SGQ6"/>
<dbReference type="FunCoup" id="Q9SGQ6">
    <property type="interactions" value="1198"/>
</dbReference>
<dbReference type="STRING" id="3702.Q9SGQ6"/>
<dbReference type="iPTMnet" id="Q9SGQ6"/>
<dbReference type="PaxDb" id="3702-AT1G76280.3"/>
<dbReference type="ProteomicsDB" id="249405">
    <molecule id="Q9SGQ6-1"/>
</dbReference>
<dbReference type="EnsemblPlants" id="AT1G76280.1">
    <molecule id="Q9SGQ6-1"/>
    <property type="protein sequence ID" value="AT1G76280.1"/>
    <property type="gene ID" value="AT1G76280"/>
</dbReference>
<dbReference type="GeneID" id="843961"/>
<dbReference type="Gramene" id="AT1G76280.1">
    <molecule id="Q9SGQ6-1"/>
    <property type="protein sequence ID" value="AT1G76280.1"/>
    <property type="gene ID" value="AT1G76280"/>
</dbReference>
<dbReference type="KEGG" id="ath:AT1G76280"/>
<dbReference type="Araport" id="AT1G76280"/>
<dbReference type="TAIR" id="AT1G76280"/>
<dbReference type="eggNOG" id="KOG4197">
    <property type="taxonomic scope" value="Eukaryota"/>
</dbReference>
<dbReference type="HOGENOM" id="CLU_373582_0_0_1"/>
<dbReference type="InParanoid" id="Q9SGQ6"/>
<dbReference type="PhylomeDB" id="Q9SGQ6"/>
<dbReference type="PRO" id="PR:Q9SGQ6"/>
<dbReference type="Proteomes" id="UP000006548">
    <property type="component" value="Chromosome 1"/>
</dbReference>
<dbReference type="ExpressionAtlas" id="Q9SGQ6">
    <property type="expression patterns" value="baseline and differential"/>
</dbReference>
<dbReference type="Gene3D" id="1.25.40.10">
    <property type="entry name" value="Tetratricopeptide repeat domain"/>
    <property type="match status" value="4"/>
</dbReference>
<dbReference type="InterPro" id="IPR002885">
    <property type="entry name" value="Pentatricopeptide_rpt"/>
</dbReference>
<dbReference type="InterPro" id="IPR011990">
    <property type="entry name" value="TPR-like_helical_dom_sf"/>
</dbReference>
<dbReference type="NCBIfam" id="TIGR00756">
    <property type="entry name" value="PPR"/>
    <property type="match status" value="3"/>
</dbReference>
<dbReference type="PANTHER" id="PTHR47859">
    <property type="entry name" value="PENTATRICOPEPTIDE REPEAT-CONTAINING PROTEIN"/>
    <property type="match status" value="1"/>
</dbReference>
<dbReference type="PANTHER" id="PTHR47859:SF1">
    <property type="entry name" value="PENTATRICOPEPTIDE REPEAT-CONTAINING PROTEIN"/>
    <property type="match status" value="1"/>
</dbReference>
<dbReference type="Pfam" id="PF13041">
    <property type="entry name" value="PPR_2"/>
    <property type="match status" value="1"/>
</dbReference>
<dbReference type="Pfam" id="PF13812">
    <property type="entry name" value="PPR_3"/>
    <property type="match status" value="2"/>
</dbReference>
<dbReference type="PROSITE" id="PS51375">
    <property type="entry name" value="PPR"/>
    <property type="match status" value="9"/>
</dbReference>
<reference key="1">
    <citation type="journal article" date="2000" name="Nature">
        <title>Sequence and analysis of chromosome 1 of the plant Arabidopsis thaliana.</title>
        <authorList>
            <person name="Theologis A."/>
            <person name="Ecker J.R."/>
            <person name="Palm C.J."/>
            <person name="Federspiel N.A."/>
            <person name="Kaul S."/>
            <person name="White O."/>
            <person name="Alonso J."/>
            <person name="Altafi H."/>
            <person name="Araujo R."/>
            <person name="Bowman C.L."/>
            <person name="Brooks S.Y."/>
            <person name="Buehler E."/>
            <person name="Chan A."/>
            <person name="Chao Q."/>
            <person name="Chen H."/>
            <person name="Cheuk R.F."/>
            <person name="Chin C.W."/>
            <person name="Chung M.K."/>
            <person name="Conn L."/>
            <person name="Conway A.B."/>
            <person name="Conway A.R."/>
            <person name="Creasy T.H."/>
            <person name="Dewar K."/>
            <person name="Dunn P."/>
            <person name="Etgu P."/>
            <person name="Feldblyum T.V."/>
            <person name="Feng J.-D."/>
            <person name="Fong B."/>
            <person name="Fujii C.Y."/>
            <person name="Gill J.E."/>
            <person name="Goldsmith A.D."/>
            <person name="Haas B."/>
            <person name="Hansen N.F."/>
            <person name="Hughes B."/>
            <person name="Huizar L."/>
            <person name="Hunter J.L."/>
            <person name="Jenkins J."/>
            <person name="Johnson-Hopson C."/>
            <person name="Khan S."/>
            <person name="Khaykin E."/>
            <person name="Kim C.J."/>
            <person name="Koo H.L."/>
            <person name="Kremenetskaia I."/>
            <person name="Kurtz D.B."/>
            <person name="Kwan A."/>
            <person name="Lam B."/>
            <person name="Langin-Hooper S."/>
            <person name="Lee A."/>
            <person name="Lee J.M."/>
            <person name="Lenz C.A."/>
            <person name="Li J.H."/>
            <person name="Li Y.-P."/>
            <person name="Lin X."/>
            <person name="Liu S.X."/>
            <person name="Liu Z.A."/>
            <person name="Luros J.S."/>
            <person name="Maiti R."/>
            <person name="Marziali A."/>
            <person name="Militscher J."/>
            <person name="Miranda M."/>
            <person name="Nguyen M."/>
            <person name="Nierman W.C."/>
            <person name="Osborne B.I."/>
            <person name="Pai G."/>
            <person name="Peterson J."/>
            <person name="Pham P.K."/>
            <person name="Rizzo M."/>
            <person name="Rooney T."/>
            <person name="Rowley D."/>
            <person name="Sakano H."/>
            <person name="Salzberg S.L."/>
            <person name="Schwartz J.R."/>
            <person name="Shinn P."/>
            <person name="Southwick A.M."/>
            <person name="Sun H."/>
            <person name="Tallon L.J."/>
            <person name="Tambunga G."/>
            <person name="Toriumi M.J."/>
            <person name="Town C.D."/>
            <person name="Utterback T."/>
            <person name="Van Aken S."/>
            <person name="Vaysberg M."/>
            <person name="Vysotskaia V.S."/>
            <person name="Walker M."/>
            <person name="Wu D."/>
            <person name="Yu G."/>
            <person name="Fraser C.M."/>
            <person name="Venter J.C."/>
            <person name="Davis R.W."/>
        </authorList>
    </citation>
    <scope>NUCLEOTIDE SEQUENCE [LARGE SCALE GENOMIC DNA]</scope>
    <source>
        <strain>cv. Columbia</strain>
    </source>
</reference>
<reference key="2">
    <citation type="journal article" date="2017" name="Plant J.">
        <title>Araport11: a complete reannotation of the Arabidopsis thaliana reference genome.</title>
        <authorList>
            <person name="Cheng C.Y."/>
            <person name="Krishnakumar V."/>
            <person name="Chan A.P."/>
            <person name="Thibaud-Nissen F."/>
            <person name="Schobel S."/>
            <person name="Town C.D."/>
        </authorList>
    </citation>
    <scope>GENOME REANNOTATION</scope>
    <source>
        <strain>cv. Columbia</strain>
    </source>
</reference>
<reference key="3">
    <citation type="journal article" date="2004" name="Genome Res.">
        <title>Whole genome sequence comparisons and 'full-length' cDNA sequences: a combined approach to evaluate and improve Arabidopsis genome annotation.</title>
        <authorList>
            <person name="Castelli V."/>
            <person name="Aury J.-M."/>
            <person name="Jaillon O."/>
            <person name="Wincker P."/>
            <person name="Clepet C."/>
            <person name="Menard M."/>
            <person name="Cruaud C."/>
            <person name="Quetier F."/>
            <person name="Scarpelli C."/>
            <person name="Schaechter V."/>
            <person name="Temple G."/>
            <person name="Caboche M."/>
            <person name="Weissenbach J."/>
            <person name="Salanoubat M."/>
        </authorList>
    </citation>
    <scope>NUCLEOTIDE SEQUENCE [LARGE SCALE MRNA]</scope>
    <source>
        <strain>cv. Columbia</strain>
    </source>
</reference>
<reference key="4">
    <citation type="journal article" date="2004" name="Plant Cell">
        <title>Genome-wide analysis of Arabidopsis pentatricopeptide repeat proteins reveals their essential role in organelle biogenesis.</title>
        <authorList>
            <person name="Lurin C."/>
            <person name="Andres C."/>
            <person name="Aubourg S."/>
            <person name="Bellaoui M."/>
            <person name="Bitton F."/>
            <person name="Bruyere C."/>
            <person name="Caboche M."/>
            <person name="Debast C."/>
            <person name="Gualberto J."/>
            <person name="Hoffmann B."/>
            <person name="Lecharny A."/>
            <person name="Le Ret M."/>
            <person name="Martin-Magniette M.-L."/>
            <person name="Mireau H."/>
            <person name="Peeters N."/>
            <person name="Renou J.-P."/>
            <person name="Szurek B."/>
            <person name="Taconnat L."/>
            <person name="Small I."/>
        </authorList>
    </citation>
    <scope>GENE FAMILY</scope>
</reference>
<name>PP126_ARATH</name>
<feature type="chain" id="PRO_0000342867" description="Pentatricopeptide repeat-containing protein At1g76280">
    <location>
        <begin position="1"/>
        <end position="773"/>
    </location>
</feature>
<feature type="repeat" description="PPR 1">
    <location>
        <begin position="130"/>
        <end position="165"/>
    </location>
</feature>
<feature type="repeat" description="PPR 2">
    <location>
        <begin position="166"/>
        <end position="200"/>
    </location>
</feature>
<feature type="repeat" description="PPR 3">
    <location>
        <begin position="201"/>
        <end position="231"/>
    </location>
</feature>
<feature type="repeat" description="PPR 4">
    <location>
        <begin position="235"/>
        <end position="269"/>
    </location>
</feature>
<feature type="repeat" description="PPR 5">
    <location>
        <begin position="332"/>
        <end position="369"/>
    </location>
</feature>
<feature type="repeat" description="PPR 6">
    <location>
        <begin position="370"/>
        <end position="400"/>
    </location>
</feature>
<feature type="repeat" description="PPR 7">
    <location>
        <begin position="402"/>
        <end position="436"/>
    </location>
</feature>
<feature type="repeat" description="PPR 8">
    <location>
        <begin position="524"/>
        <end position="558"/>
    </location>
</feature>
<feature type="repeat" description="PPR 9">
    <location>
        <begin position="559"/>
        <end position="593"/>
    </location>
</feature>
<feature type="repeat" description="PPR 10">
    <location>
        <begin position="594"/>
        <end position="628"/>
    </location>
</feature>
<feature type="repeat" description="PPR 11">
    <location>
        <begin position="629"/>
        <end position="663"/>
    </location>
</feature>